<comment type="function">
    <text evidence="1">Glycosidase.</text>
</comment>
<comment type="cofactor">
    <cofactor evidence="1">
        <name>NAD(+)</name>
        <dbReference type="ChEBI" id="CHEBI:57540"/>
    </cofactor>
    <text evidence="1">Binds 1 NAD(+) per subunit. The NAD(+) cannot dissociate.</text>
</comment>
<comment type="PTM">
    <text>Predicted to be exported by the Tat system. The position of the signal peptide cleavage has not been experimentally proven.</text>
</comment>
<comment type="similarity">
    <text evidence="4">Belongs to the Gfo/Idh/MocA family. Glycosyl hydrolase 109 subfamily.</text>
</comment>
<dbReference type="EC" id="3.2.1.-"/>
<dbReference type="EMBL" id="CP000473">
    <property type="protein sequence ID" value="ABJ87512.1"/>
    <property type="molecule type" value="Genomic_DNA"/>
</dbReference>
<dbReference type="SMR" id="Q01S58"/>
<dbReference type="STRING" id="234267.Acid_6590"/>
<dbReference type="CAZy" id="GH109">
    <property type="family name" value="Glycoside Hydrolase Family 109"/>
</dbReference>
<dbReference type="KEGG" id="sus:Acid_6590"/>
<dbReference type="eggNOG" id="COG0673">
    <property type="taxonomic scope" value="Bacteria"/>
</dbReference>
<dbReference type="HOGENOM" id="CLU_046965_0_0_0"/>
<dbReference type="InParanoid" id="Q01S58"/>
<dbReference type="OrthoDB" id="9771072at2"/>
<dbReference type="GO" id="GO:0016798">
    <property type="term" value="F:hydrolase activity, acting on glycosyl bonds"/>
    <property type="evidence" value="ECO:0007669"/>
    <property type="project" value="UniProtKB-KW"/>
</dbReference>
<dbReference type="GO" id="GO:0000166">
    <property type="term" value="F:nucleotide binding"/>
    <property type="evidence" value="ECO:0007669"/>
    <property type="project" value="InterPro"/>
</dbReference>
<dbReference type="Gene3D" id="3.30.360.10">
    <property type="entry name" value="Dihydrodipicolinate Reductase, domain 2"/>
    <property type="match status" value="1"/>
</dbReference>
<dbReference type="Gene3D" id="3.40.50.720">
    <property type="entry name" value="NAD(P)-binding Rossmann-like Domain"/>
    <property type="match status" value="1"/>
</dbReference>
<dbReference type="InterPro" id="IPR000683">
    <property type="entry name" value="Gfo/Idh/MocA-like_OxRdtase_N"/>
</dbReference>
<dbReference type="InterPro" id="IPR050463">
    <property type="entry name" value="Gfo/Idh/MocA_oxidrdct_glycsds"/>
</dbReference>
<dbReference type="InterPro" id="IPR049303">
    <property type="entry name" value="Glyco_hydro_109_C"/>
</dbReference>
<dbReference type="InterPro" id="IPR036291">
    <property type="entry name" value="NAD(P)-bd_dom_sf"/>
</dbReference>
<dbReference type="InterPro" id="IPR006311">
    <property type="entry name" value="TAT_signal"/>
</dbReference>
<dbReference type="InterPro" id="IPR019546">
    <property type="entry name" value="TAT_signal_bac_arc"/>
</dbReference>
<dbReference type="NCBIfam" id="TIGR01409">
    <property type="entry name" value="TAT_signal_seq"/>
    <property type="match status" value="1"/>
</dbReference>
<dbReference type="PANTHER" id="PTHR43818">
    <property type="entry name" value="BCDNA.GH03377"/>
    <property type="match status" value="1"/>
</dbReference>
<dbReference type="PANTHER" id="PTHR43818:SF1">
    <property type="entry name" value="GLYCOSYL HYDROLASE FAMILY 109 PROTEIN"/>
    <property type="match status" value="1"/>
</dbReference>
<dbReference type="Pfam" id="PF01408">
    <property type="entry name" value="GFO_IDH_MocA"/>
    <property type="match status" value="1"/>
</dbReference>
<dbReference type="Pfam" id="PF21252">
    <property type="entry name" value="Glyco_hydro_109_C"/>
    <property type="match status" value="1"/>
</dbReference>
<dbReference type="SUPFAM" id="SSF51735">
    <property type="entry name" value="NAD(P)-binding Rossmann-fold domains"/>
    <property type="match status" value="1"/>
</dbReference>
<dbReference type="PROSITE" id="PS51318">
    <property type="entry name" value="TAT"/>
    <property type="match status" value="1"/>
</dbReference>
<protein>
    <recommendedName>
        <fullName>Glycosyl hydrolase family 109 protein</fullName>
        <ecNumber>3.2.1.-</ecNumber>
    </recommendedName>
</protein>
<name>GH109_SOLUE</name>
<accession>Q01S58</accession>
<evidence type="ECO:0000250" key="1"/>
<evidence type="ECO:0000255" key="2">
    <source>
        <dbReference type="PROSITE-ProRule" id="PRU00648"/>
    </source>
</evidence>
<evidence type="ECO:0000256" key="3">
    <source>
        <dbReference type="SAM" id="MobiDB-lite"/>
    </source>
</evidence>
<evidence type="ECO:0000305" key="4"/>
<gene>
    <name type="ordered locus">Acid_6590</name>
</gene>
<keyword id="KW-0326">Glycosidase</keyword>
<keyword id="KW-0378">Hydrolase</keyword>
<keyword id="KW-0520">NAD</keyword>
<keyword id="KW-0732">Signal</keyword>
<feature type="signal peptide" description="Tat-type signal" evidence="2">
    <location>
        <begin position="1"/>
        <end position="33"/>
    </location>
</feature>
<feature type="chain" id="PRO_5000005189" description="Glycosyl hydrolase family 109 protein">
    <location>
        <begin position="34"/>
        <end position="438"/>
    </location>
</feature>
<feature type="region of interest" description="Disordered" evidence="3">
    <location>
        <begin position="408"/>
        <end position="438"/>
    </location>
</feature>
<feature type="binding site" evidence="1">
    <location>
        <begin position="52"/>
        <end position="53"/>
    </location>
    <ligand>
        <name>NAD(+)</name>
        <dbReference type="ChEBI" id="CHEBI:57540"/>
    </ligand>
</feature>
<feature type="binding site" evidence="1">
    <location>
        <position position="74"/>
    </location>
    <ligand>
        <name>NAD(+)</name>
        <dbReference type="ChEBI" id="CHEBI:57540"/>
    </ligand>
</feature>
<feature type="binding site" evidence="1">
    <location>
        <begin position="125"/>
        <end position="128"/>
    </location>
    <ligand>
        <name>NAD(+)</name>
        <dbReference type="ChEBI" id="CHEBI:57540"/>
    </ligand>
</feature>
<feature type="binding site" evidence="1">
    <location>
        <begin position="145"/>
        <end position="146"/>
    </location>
    <ligand>
        <name>NAD(+)</name>
        <dbReference type="ChEBI" id="CHEBI:57540"/>
    </ligand>
</feature>
<feature type="binding site" evidence="1">
    <location>
        <position position="174"/>
    </location>
    <ligand>
        <name>NAD(+)</name>
        <dbReference type="ChEBI" id="CHEBI:57540"/>
    </ligand>
</feature>
<feature type="binding site" evidence="1">
    <location>
        <position position="203"/>
    </location>
    <ligand>
        <name>substrate</name>
    </ligand>
</feature>
<feature type="binding site" evidence="1">
    <location>
        <position position="221"/>
    </location>
    <ligand>
        <name>substrate</name>
    </ligand>
</feature>
<feature type="binding site" evidence="1">
    <location>
        <begin position="233"/>
        <end position="236"/>
    </location>
    <ligand>
        <name>substrate</name>
    </ligand>
</feature>
<feature type="binding site" evidence="1">
    <location>
        <position position="233"/>
    </location>
    <ligand>
        <name>NAD(+)</name>
        <dbReference type="ChEBI" id="CHEBI:57540"/>
    </ligand>
</feature>
<feature type="binding site" evidence="1">
    <location>
        <position position="315"/>
    </location>
    <ligand>
        <name>substrate</name>
    </ligand>
</feature>
<proteinExistence type="inferred from homology"/>
<reference key="1">
    <citation type="journal article" date="2009" name="Appl. Environ. Microbiol.">
        <title>Three genomes from the phylum Acidobacteria provide insight into the lifestyles of these microorganisms in soils.</title>
        <authorList>
            <person name="Ward N.L."/>
            <person name="Challacombe J.F."/>
            <person name="Janssen P.H."/>
            <person name="Henrissat B."/>
            <person name="Coutinho P.M."/>
            <person name="Wu M."/>
            <person name="Xie G."/>
            <person name="Haft D.H."/>
            <person name="Sait M."/>
            <person name="Badger J."/>
            <person name="Barabote R.D."/>
            <person name="Bradley B."/>
            <person name="Brettin T.S."/>
            <person name="Brinkac L.M."/>
            <person name="Bruce D."/>
            <person name="Creasy T."/>
            <person name="Daugherty S.C."/>
            <person name="Davidsen T.M."/>
            <person name="DeBoy R.T."/>
            <person name="Detter J.C."/>
            <person name="Dodson R.J."/>
            <person name="Durkin A.S."/>
            <person name="Ganapathy A."/>
            <person name="Gwinn-Giglio M."/>
            <person name="Han C.S."/>
            <person name="Khouri H."/>
            <person name="Kiss H."/>
            <person name="Kothari S.P."/>
            <person name="Madupu R."/>
            <person name="Nelson K.E."/>
            <person name="Nelson W.C."/>
            <person name="Paulsen I."/>
            <person name="Penn K."/>
            <person name="Ren Q."/>
            <person name="Rosovitz M.J."/>
            <person name="Selengut J.D."/>
            <person name="Shrivastava S."/>
            <person name="Sullivan S.A."/>
            <person name="Tapia R."/>
            <person name="Thompson L.S."/>
            <person name="Watkins K.L."/>
            <person name="Yang Q."/>
            <person name="Yu C."/>
            <person name="Zafar N."/>
            <person name="Zhou L."/>
            <person name="Kuske C.R."/>
        </authorList>
    </citation>
    <scope>NUCLEOTIDE SEQUENCE [LARGE SCALE GENOMIC DNA]</scope>
    <source>
        <strain>Ellin6076</strain>
    </source>
</reference>
<sequence length="438" mass="48656">MDKTSRRDLLKLASLAGIGAGLARSQGSSKSMAGVSFKPNGTVRIGVIGTGGRGGSLIENFSAVEGVQITALCDTVKDKVLKQQAWLDKAGKASHPIALFHSDDHAFENLVKRDDVDLVVVSTPWVWHTRMAVAAMKQGKHVAVEVPAARTIDECWELVNTSEATQRHCIQLENCCYGYNEMMVLNMVRAGLFGELTHGGAAYNHDLRSILFSAEGEGEWRRFEHLNRDGNLYPTHGLGPVAHYMDVNRGDRFDTLVSMSSISASLQQYRKEKIPAGDPRQKEVYKEGDFNVSLIRTVKGRVIELEHNVSSPQPYDRINLIAGTKGIFRDYPPRIYFDGARREDFETLDRYKEKYEHPLWKKVGELAKELGGHGGMDFVMAYRLIQCMKEGTPPDIDVYDAAAWSAPGPLSEASVANGSAPQKFPDFTRGKWQTRQPV</sequence>
<organism>
    <name type="scientific">Solibacter usitatus (strain Ellin6076)</name>
    <dbReference type="NCBI Taxonomy" id="234267"/>
    <lineage>
        <taxon>Bacteria</taxon>
        <taxon>Pseudomonadati</taxon>
        <taxon>Acidobacteriota</taxon>
        <taxon>Terriglobia</taxon>
        <taxon>Bryobacterales</taxon>
        <taxon>Solibacteraceae</taxon>
        <taxon>Candidatus Solibacter</taxon>
    </lineage>
</organism>